<dbReference type="EMBL" id="AE015451">
    <property type="protein sequence ID" value="AAN66075.1"/>
    <property type="molecule type" value="Genomic_DNA"/>
</dbReference>
<dbReference type="RefSeq" id="NP_742611.1">
    <property type="nucleotide sequence ID" value="NC_002947.4"/>
</dbReference>
<dbReference type="RefSeq" id="WP_003255497.1">
    <property type="nucleotide sequence ID" value="NZ_CP169744.1"/>
</dbReference>
<dbReference type="STRING" id="160488.PP_0445"/>
<dbReference type="PaxDb" id="160488-PP_0445"/>
<dbReference type="GeneID" id="83677743"/>
<dbReference type="KEGG" id="ppu:PP_0445"/>
<dbReference type="PATRIC" id="fig|160488.4.peg.476"/>
<dbReference type="eggNOG" id="COG0244">
    <property type="taxonomic scope" value="Bacteria"/>
</dbReference>
<dbReference type="HOGENOM" id="CLU_092227_0_2_6"/>
<dbReference type="OrthoDB" id="9808307at2"/>
<dbReference type="PhylomeDB" id="Q88QP3"/>
<dbReference type="BioCyc" id="PPUT160488:G1G01-489-MONOMER"/>
<dbReference type="Proteomes" id="UP000000556">
    <property type="component" value="Chromosome"/>
</dbReference>
<dbReference type="GO" id="GO:0015934">
    <property type="term" value="C:large ribosomal subunit"/>
    <property type="evidence" value="ECO:0007669"/>
    <property type="project" value="InterPro"/>
</dbReference>
<dbReference type="GO" id="GO:0070180">
    <property type="term" value="F:large ribosomal subunit rRNA binding"/>
    <property type="evidence" value="ECO:0007669"/>
    <property type="project" value="UniProtKB-UniRule"/>
</dbReference>
<dbReference type="GO" id="GO:0003735">
    <property type="term" value="F:structural constituent of ribosome"/>
    <property type="evidence" value="ECO:0007669"/>
    <property type="project" value="InterPro"/>
</dbReference>
<dbReference type="GO" id="GO:0006412">
    <property type="term" value="P:translation"/>
    <property type="evidence" value="ECO:0007669"/>
    <property type="project" value="UniProtKB-UniRule"/>
</dbReference>
<dbReference type="CDD" id="cd05797">
    <property type="entry name" value="Ribosomal_L10"/>
    <property type="match status" value="1"/>
</dbReference>
<dbReference type="FunFam" id="3.30.70.1730:FF:000001">
    <property type="entry name" value="50S ribosomal protein L10"/>
    <property type="match status" value="1"/>
</dbReference>
<dbReference type="Gene3D" id="3.30.70.1730">
    <property type="match status" value="1"/>
</dbReference>
<dbReference type="Gene3D" id="6.10.250.2350">
    <property type="match status" value="1"/>
</dbReference>
<dbReference type="HAMAP" id="MF_00362">
    <property type="entry name" value="Ribosomal_uL10"/>
    <property type="match status" value="1"/>
</dbReference>
<dbReference type="InterPro" id="IPR001790">
    <property type="entry name" value="Ribosomal_uL10"/>
</dbReference>
<dbReference type="InterPro" id="IPR043141">
    <property type="entry name" value="Ribosomal_uL10-like_sf"/>
</dbReference>
<dbReference type="InterPro" id="IPR022973">
    <property type="entry name" value="Ribosomal_uL10_bac"/>
</dbReference>
<dbReference type="InterPro" id="IPR047865">
    <property type="entry name" value="Ribosomal_uL10_bac_type"/>
</dbReference>
<dbReference type="InterPro" id="IPR002363">
    <property type="entry name" value="Ribosomal_uL10_CS_bac"/>
</dbReference>
<dbReference type="NCBIfam" id="NF000955">
    <property type="entry name" value="PRK00099.1-1"/>
    <property type="match status" value="1"/>
</dbReference>
<dbReference type="PANTHER" id="PTHR11560">
    <property type="entry name" value="39S RIBOSOMAL PROTEIN L10, MITOCHONDRIAL"/>
    <property type="match status" value="1"/>
</dbReference>
<dbReference type="Pfam" id="PF00466">
    <property type="entry name" value="Ribosomal_L10"/>
    <property type="match status" value="1"/>
</dbReference>
<dbReference type="SUPFAM" id="SSF160369">
    <property type="entry name" value="Ribosomal protein L10-like"/>
    <property type="match status" value="1"/>
</dbReference>
<dbReference type="PROSITE" id="PS01109">
    <property type="entry name" value="RIBOSOMAL_L10"/>
    <property type="match status" value="1"/>
</dbReference>
<organism>
    <name type="scientific">Pseudomonas putida (strain ATCC 47054 / DSM 6125 / CFBP 8728 / NCIMB 11950 / KT2440)</name>
    <dbReference type="NCBI Taxonomy" id="160488"/>
    <lineage>
        <taxon>Bacteria</taxon>
        <taxon>Pseudomonadati</taxon>
        <taxon>Pseudomonadota</taxon>
        <taxon>Gammaproteobacteria</taxon>
        <taxon>Pseudomonadales</taxon>
        <taxon>Pseudomonadaceae</taxon>
        <taxon>Pseudomonas</taxon>
    </lineage>
</organism>
<evidence type="ECO:0000255" key="1">
    <source>
        <dbReference type="HAMAP-Rule" id="MF_00362"/>
    </source>
</evidence>
<evidence type="ECO:0000305" key="2"/>
<feature type="chain" id="PRO_0000154691" description="Large ribosomal subunit protein uL10">
    <location>
        <begin position="1"/>
        <end position="166"/>
    </location>
</feature>
<gene>
    <name evidence="1" type="primary">rplJ</name>
    <name type="ordered locus">PP_0445</name>
</gene>
<proteinExistence type="inferred from homology"/>
<keyword id="KW-1185">Reference proteome</keyword>
<keyword id="KW-0687">Ribonucleoprotein</keyword>
<keyword id="KW-0689">Ribosomal protein</keyword>
<keyword id="KW-0694">RNA-binding</keyword>
<keyword id="KW-0699">rRNA-binding</keyword>
<name>RL10_PSEPK</name>
<accession>Q88QP3</accession>
<comment type="function">
    <text evidence="1">Forms part of the ribosomal stalk, playing a central role in the interaction of the ribosome with GTP-bound translation factors.</text>
</comment>
<comment type="subunit">
    <text evidence="1">Part of the ribosomal stalk of the 50S ribosomal subunit. The N-terminus interacts with L11 and the large rRNA to form the base of the stalk. The C-terminus forms an elongated spine to which L12 dimers bind in a sequential fashion forming a multimeric L10(L12)X complex.</text>
</comment>
<comment type="similarity">
    <text evidence="1">Belongs to the universal ribosomal protein uL10 family.</text>
</comment>
<reference key="1">
    <citation type="journal article" date="2002" name="Environ. Microbiol.">
        <title>Complete genome sequence and comparative analysis of the metabolically versatile Pseudomonas putida KT2440.</title>
        <authorList>
            <person name="Nelson K.E."/>
            <person name="Weinel C."/>
            <person name="Paulsen I.T."/>
            <person name="Dodson R.J."/>
            <person name="Hilbert H."/>
            <person name="Martins dos Santos V.A.P."/>
            <person name="Fouts D.E."/>
            <person name="Gill S.R."/>
            <person name="Pop M."/>
            <person name="Holmes M."/>
            <person name="Brinkac L.M."/>
            <person name="Beanan M.J."/>
            <person name="DeBoy R.T."/>
            <person name="Daugherty S.C."/>
            <person name="Kolonay J.F."/>
            <person name="Madupu R."/>
            <person name="Nelson W.C."/>
            <person name="White O."/>
            <person name="Peterson J.D."/>
            <person name="Khouri H.M."/>
            <person name="Hance I."/>
            <person name="Chris Lee P."/>
            <person name="Holtzapple E.K."/>
            <person name="Scanlan D."/>
            <person name="Tran K."/>
            <person name="Moazzez A."/>
            <person name="Utterback T.R."/>
            <person name="Rizzo M."/>
            <person name="Lee K."/>
            <person name="Kosack D."/>
            <person name="Moestl D."/>
            <person name="Wedler H."/>
            <person name="Lauber J."/>
            <person name="Stjepandic D."/>
            <person name="Hoheisel J."/>
            <person name="Straetz M."/>
            <person name="Heim S."/>
            <person name="Kiewitz C."/>
            <person name="Eisen J.A."/>
            <person name="Timmis K.N."/>
            <person name="Duesterhoeft A."/>
            <person name="Tuemmler B."/>
            <person name="Fraser C.M."/>
        </authorList>
    </citation>
    <scope>NUCLEOTIDE SEQUENCE [LARGE SCALE GENOMIC DNA]</scope>
    <source>
        <strain>ATCC 47054 / DSM 6125 / CFBP 8728 / NCIMB 11950 / KT2440</strain>
    </source>
</reference>
<sequence>MAIKLEDKKAIVAEVNEAAKVALSAVVADARGVTVSAMTGLRKEAREAGVYVRVVRNTLLKRAVEGTEFSILNDAFKGPTLIAFSNEHPGAAARLFKEFAKGQDKFEIKAAAFDGNFIAANQIDVLATLPTRDEAIARLMSVIQGATSKLARTLAAIRDQKEATAA</sequence>
<protein>
    <recommendedName>
        <fullName evidence="1">Large ribosomal subunit protein uL10</fullName>
    </recommendedName>
    <alternativeName>
        <fullName evidence="2">50S ribosomal protein L10</fullName>
    </alternativeName>
</protein>